<sequence length="317" mass="35463">MQLQTQSFALNLLPSPNFAKPIERREFISLKRDPSRPISLRCSVSTTLDTPATASTHKPFPAEVSRSIMELSSVGTLSTLTHDGWPLGVGVRFAVDKDGTPVLCLNRSVSPDKRSALHVQLEQCGLRTPQCTIQGSIGRPGDDTVLKRLSATWREKFGEEVKEDSLYVVAVDRVLQMEDFMEDGIWVASSDYKNASPDPLRDIAEDIVNQINANNMEDIFRFCNVYVDLDFVVSETKMIWMDRLGFDLRVWSPRGVYDVRIPFPMEVTDEKGAKSSFNGMSQLAWEVEKSYCPADFNKVKLLKQVVGSSHSHKGGGQ</sequence>
<comment type="function">
    <text>Involved in the regulation of glutamyl-tRNA reductase (GluTR) which is important for the synthesis and distribution of 5-aminolevulinate, a precursor in heme and chlorophyll biosynthesis (PubMed:22180625). Stimulates GluTR activity and regulates glutamate-1-semialdehyde release. May play a role in heme metabolism (PubMed:24753615). Necessary for efficient photosynthetic electron transport in chloroplasts (PubMed:20657737).</text>
</comment>
<comment type="subunit">
    <text evidence="3 4">Interacts with HEMA1 (PubMed:22180625, PubMed:24753615) and forms a heterotetramer of two GLUTRBP and two HEMA1 subunits (PubMed:24753615).</text>
</comment>
<comment type="subcellular location">
    <subcellularLocation>
        <location evidence="2 3">Plastid</location>
        <location evidence="2 3">Chloroplast stroma</location>
    </subcellularLocation>
    <text evidence="2 3">Detected at low levels in thylakoids.</text>
</comment>
<comment type="disruption phenotype">
    <text evidence="2 3">Reduced growth, slightly pale green leaves, reduced levels of chlorophyll and heme, and low non-photochemical quenching (NPQ).</text>
</comment>
<organism>
    <name type="scientific">Arabidopsis thaliana</name>
    <name type="common">Mouse-ear cress</name>
    <dbReference type="NCBI Taxonomy" id="3702"/>
    <lineage>
        <taxon>Eukaryota</taxon>
        <taxon>Viridiplantae</taxon>
        <taxon>Streptophyta</taxon>
        <taxon>Embryophyta</taxon>
        <taxon>Tracheophyta</taxon>
        <taxon>Spermatophyta</taxon>
        <taxon>Magnoliopsida</taxon>
        <taxon>eudicotyledons</taxon>
        <taxon>Gunneridae</taxon>
        <taxon>Pentapetalae</taxon>
        <taxon>rosids</taxon>
        <taxon>malvids</taxon>
        <taxon>Brassicales</taxon>
        <taxon>Brassicaceae</taxon>
        <taxon>Camelineae</taxon>
        <taxon>Arabidopsis</taxon>
    </lineage>
</organism>
<gene>
    <name evidence="6" type="primary">GLUTRBP</name>
    <name evidence="5" type="synonym">PGR7</name>
    <name evidence="8" type="ordered locus">At3g21200</name>
    <name evidence="9" type="ORF">MXL8.5</name>
</gene>
<proteinExistence type="evidence at protein level"/>
<reference key="1">
    <citation type="journal article" date="2000" name="DNA Res.">
        <title>Structural analysis of Arabidopsis thaliana chromosome 3. I. Sequence features of the regions of 4,504,864 bp covered by sixty P1 and TAC clones.</title>
        <authorList>
            <person name="Sato S."/>
            <person name="Nakamura Y."/>
            <person name="Kaneko T."/>
            <person name="Katoh T."/>
            <person name="Asamizu E."/>
            <person name="Tabata S."/>
        </authorList>
    </citation>
    <scope>NUCLEOTIDE SEQUENCE [LARGE SCALE GENOMIC DNA]</scope>
    <source>
        <strain>cv. Columbia</strain>
    </source>
</reference>
<reference key="2">
    <citation type="journal article" date="2017" name="Plant J.">
        <title>Araport11: a complete reannotation of the Arabidopsis thaliana reference genome.</title>
        <authorList>
            <person name="Cheng C.Y."/>
            <person name="Krishnakumar V."/>
            <person name="Chan A.P."/>
            <person name="Thibaud-Nissen F."/>
            <person name="Schobel S."/>
            <person name="Town C.D."/>
        </authorList>
    </citation>
    <scope>GENOME REANNOTATION</scope>
    <source>
        <strain>cv. Columbia</strain>
    </source>
</reference>
<reference key="3">
    <citation type="journal article" date="2003" name="Science">
        <title>Empirical analysis of transcriptional activity in the Arabidopsis genome.</title>
        <authorList>
            <person name="Yamada K."/>
            <person name="Lim J."/>
            <person name="Dale J.M."/>
            <person name="Chen H."/>
            <person name="Shinn P."/>
            <person name="Palm C.J."/>
            <person name="Southwick A.M."/>
            <person name="Wu H.C."/>
            <person name="Kim C.J."/>
            <person name="Nguyen M."/>
            <person name="Pham P.K."/>
            <person name="Cheuk R.F."/>
            <person name="Karlin-Newmann G."/>
            <person name="Liu S.X."/>
            <person name="Lam B."/>
            <person name="Sakano H."/>
            <person name="Wu T."/>
            <person name="Yu G."/>
            <person name="Miranda M."/>
            <person name="Quach H.L."/>
            <person name="Tripp M."/>
            <person name="Chang C.H."/>
            <person name="Lee J.M."/>
            <person name="Toriumi M.J."/>
            <person name="Chan M.M."/>
            <person name="Tang C.C."/>
            <person name="Onodera C.S."/>
            <person name="Deng J.M."/>
            <person name="Akiyama K."/>
            <person name="Ansari Y."/>
            <person name="Arakawa T."/>
            <person name="Banh J."/>
            <person name="Banno F."/>
            <person name="Bowser L."/>
            <person name="Brooks S.Y."/>
            <person name="Carninci P."/>
            <person name="Chao Q."/>
            <person name="Choy N."/>
            <person name="Enju A."/>
            <person name="Goldsmith A.D."/>
            <person name="Gurjal M."/>
            <person name="Hansen N.F."/>
            <person name="Hayashizaki Y."/>
            <person name="Johnson-Hopson C."/>
            <person name="Hsuan V.W."/>
            <person name="Iida K."/>
            <person name="Karnes M."/>
            <person name="Khan S."/>
            <person name="Koesema E."/>
            <person name="Ishida J."/>
            <person name="Jiang P.X."/>
            <person name="Jones T."/>
            <person name="Kawai J."/>
            <person name="Kamiya A."/>
            <person name="Meyers C."/>
            <person name="Nakajima M."/>
            <person name="Narusaka M."/>
            <person name="Seki M."/>
            <person name="Sakurai T."/>
            <person name="Satou M."/>
            <person name="Tamse R."/>
            <person name="Vaysberg M."/>
            <person name="Wallender E.K."/>
            <person name="Wong C."/>
            <person name="Yamamura Y."/>
            <person name="Yuan S."/>
            <person name="Shinozaki K."/>
            <person name="Davis R.W."/>
            <person name="Theologis A."/>
            <person name="Ecker J.R."/>
        </authorList>
    </citation>
    <scope>NUCLEOTIDE SEQUENCE [LARGE SCALE MRNA]</scope>
    <source>
        <strain>cv. Columbia</strain>
    </source>
</reference>
<reference key="4">
    <citation type="submission" date="2002-03" db="EMBL/GenBank/DDBJ databases">
        <title>Full-length cDNA from Arabidopsis thaliana.</title>
        <authorList>
            <person name="Brover V.V."/>
            <person name="Troukhan M.E."/>
            <person name="Alexandrov N.A."/>
            <person name="Lu Y.-P."/>
            <person name="Flavell R.B."/>
            <person name="Feldmann K.A."/>
        </authorList>
    </citation>
    <scope>NUCLEOTIDE SEQUENCE [LARGE SCALE MRNA]</scope>
</reference>
<reference key="5">
    <citation type="journal article" date="2010" name="PLoS ONE">
        <title>Arabidopsis thaliana PGR7 encodes a conserved chloroplast protein that is necessary for efficient photosynthetic electron transport.</title>
        <authorList>
            <person name="Jung H.S."/>
            <person name="Okegawa Y."/>
            <person name="Shih P.M."/>
            <person name="Kellogg E."/>
            <person name="Abdel-Ghany S.E."/>
            <person name="Pilon M."/>
            <person name="Sjolander K."/>
            <person name="Shikanai T."/>
            <person name="Niyogi K.K."/>
        </authorList>
    </citation>
    <scope>FUNCTION</scope>
    <scope>SUBCELLULAR LOCATION</scope>
    <scope>DISRUPTION PHENOTYPE</scope>
</reference>
<reference key="6">
    <citation type="journal article" date="2011" name="Plant Cell">
        <title>An Arabidopsis GluTR binding protein mediates spatial separation of 5-aminolevulinic acid synthesis in chloroplasts.</title>
        <authorList>
            <person name="Czarnecki O."/>
            <person name="Hedtke B."/>
            <person name="Melzer M."/>
            <person name="Rothbart M."/>
            <person name="Richter A."/>
            <person name="Schroter Y."/>
            <person name="Pfannschmidt T."/>
            <person name="Grimm B."/>
        </authorList>
    </citation>
    <scope>FUNCTION</scope>
    <scope>SUBCELLULAR LOCATION</scope>
    <scope>INTERACTION WITH HEMA1</scope>
    <scope>DISRUPTION PHENOTYPE</scope>
</reference>
<reference key="7">
    <citation type="journal article" date="2014" name="Proc. Natl. Acad. Sci. U.S.A.">
        <title>Crystal structure of Arabidopsis glutamyl-tRNA reductase in complex with its stimulator protein.</title>
        <authorList>
            <person name="Zhao A."/>
            <person name="Fang Y."/>
            <person name="Chen X."/>
            <person name="Zhao S."/>
            <person name="Dong W."/>
            <person name="Lin Y."/>
            <person name="Gong W."/>
            <person name="Liu L."/>
        </authorList>
    </citation>
    <scope>X-RAY CRYSTALLOGRAPHY (2.80 ANGSTROMS) OF 42-317</scope>
    <scope>FUNCTION</scope>
    <scope>SUBUNIT</scope>
</reference>
<feature type="transit peptide" description="Chloroplast" evidence="7">
    <location>
        <begin position="1"/>
        <end position="42"/>
    </location>
</feature>
<feature type="chain" id="PRO_0000430936" description="Glutamyl-tRNA reductase-binding protein, chloroplastic" evidence="1">
    <location>
        <begin position="43"/>
        <end position="317"/>
    </location>
</feature>
<feature type="sequence conflict" description="In Ref. 4; AAM65419." ref="4">
    <original>F</original>
    <variation>L</variation>
    <location>
        <position position="27"/>
    </location>
</feature>
<feature type="sequence conflict" description="In Ref. 4; AAM65419." ref="4">
    <original>V</original>
    <variation>I</variation>
    <location>
        <position position="102"/>
    </location>
</feature>
<feature type="sequence conflict" description="In Ref. 4; AAM65419." ref="4">
    <original>R</original>
    <variation>K</variation>
    <location>
        <position position="154"/>
    </location>
</feature>
<feature type="sequence conflict" description="In Ref. 4; AAM65419." ref="4">
    <original>K</original>
    <variation>E</variation>
    <location>
        <position position="162"/>
    </location>
</feature>
<feature type="helix" evidence="11">
    <location>
        <begin position="61"/>
        <end position="71"/>
    </location>
</feature>
<feature type="strand" evidence="11">
    <location>
        <begin position="74"/>
        <end position="80"/>
    </location>
</feature>
<feature type="strand" evidence="10">
    <location>
        <begin position="82"/>
        <end position="84"/>
    </location>
</feature>
<feature type="strand" evidence="11">
    <location>
        <begin position="86"/>
        <end position="95"/>
    </location>
</feature>
<feature type="strand" evidence="11">
    <location>
        <begin position="101"/>
        <end position="104"/>
    </location>
</feature>
<feature type="strand" evidence="11">
    <location>
        <begin position="114"/>
        <end position="120"/>
    </location>
</feature>
<feature type="turn" evidence="11">
    <location>
        <begin position="124"/>
        <end position="126"/>
    </location>
</feature>
<feature type="strand" evidence="11">
    <location>
        <begin position="130"/>
        <end position="138"/>
    </location>
</feature>
<feature type="strand" evidence="10">
    <location>
        <begin position="141"/>
        <end position="143"/>
    </location>
</feature>
<feature type="helix" evidence="11">
    <location>
        <begin position="145"/>
        <end position="157"/>
    </location>
</feature>
<feature type="helix" evidence="11">
    <location>
        <begin position="163"/>
        <end position="165"/>
    </location>
</feature>
<feature type="strand" evidence="11">
    <location>
        <begin position="166"/>
        <end position="179"/>
    </location>
</feature>
<feature type="strand" evidence="11">
    <location>
        <begin position="185"/>
        <end position="188"/>
    </location>
</feature>
<feature type="helix" evidence="11">
    <location>
        <begin position="189"/>
        <end position="194"/>
    </location>
</feature>
<feature type="turn" evidence="11">
    <location>
        <begin position="199"/>
        <end position="203"/>
    </location>
</feature>
<feature type="helix" evidence="11">
    <location>
        <begin position="204"/>
        <end position="214"/>
    </location>
</feature>
<feature type="helix" evidence="11">
    <location>
        <begin position="216"/>
        <end position="225"/>
    </location>
</feature>
<feature type="strand" evidence="11">
    <location>
        <begin position="234"/>
        <end position="242"/>
    </location>
</feature>
<feature type="strand" evidence="11">
    <location>
        <begin position="245"/>
        <end position="251"/>
    </location>
</feature>
<feature type="strand" evidence="11">
    <location>
        <begin position="256"/>
        <end position="262"/>
    </location>
</feature>
<feature type="helix" evidence="11">
    <location>
        <begin position="270"/>
        <end position="288"/>
    </location>
</feature>
<feature type="strand" evidence="11">
    <location>
        <begin position="303"/>
        <end position="305"/>
    </location>
</feature>
<protein>
    <recommendedName>
        <fullName evidence="6">Glutamyl-tRNA reductase-binding protein, chloroplastic</fullName>
        <shortName evidence="6">AtGluTRBP</shortName>
        <shortName evidence="6">GluTR-binding protein</shortName>
    </recommendedName>
    <alternativeName>
        <fullName evidence="5">Protein PROTON GRADIENT REGULATION 7</fullName>
    </alternativeName>
</protein>
<dbReference type="EMBL" id="AB023045">
    <property type="protein sequence ID" value="BAB01711.1"/>
    <property type="molecule type" value="Genomic_DNA"/>
</dbReference>
<dbReference type="EMBL" id="CP002686">
    <property type="protein sequence ID" value="AEE76475.1"/>
    <property type="molecule type" value="Genomic_DNA"/>
</dbReference>
<dbReference type="EMBL" id="AY062654">
    <property type="protein sequence ID" value="AAL32732.1"/>
    <property type="molecule type" value="mRNA"/>
</dbReference>
<dbReference type="EMBL" id="BT002574">
    <property type="protein sequence ID" value="AAO00934.1"/>
    <property type="molecule type" value="mRNA"/>
</dbReference>
<dbReference type="EMBL" id="AY087867">
    <property type="protein sequence ID" value="AAM65419.1"/>
    <property type="molecule type" value="mRNA"/>
</dbReference>
<dbReference type="RefSeq" id="NP_566678.1">
    <property type="nucleotide sequence ID" value="NM_113015.3"/>
</dbReference>
<dbReference type="PDB" id="4N7R">
    <property type="method" value="X-ray"/>
    <property type="resolution" value="2.80 A"/>
    <property type="chains" value="C/D=42-317"/>
</dbReference>
<dbReference type="PDB" id="5CHE">
    <property type="method" value="X-ray"/>
    <property type="resolution" value="3.20 A"/>
    <property type="chains" value="C/D=42-317"/>
</dbReference>
<dbReference type="PDB" id="5YJL">
    <property type="method" value="X-ray"/>
    <property type="resolution" value="2.70 A"/>
    <property type="chains" value="C/D=42-317"/>
</dbReference>
<dbReference type="PDBsum" id="4N7R"/>
<dbReference type="PDBsum" id="5CHE"/>
<dbReference type="PDBsum" id="5YJL"/>
<dbReference type="SMR" id="Q9LU39"/>
<dbReference type="BioGRID" id="7005">
    <property type="interactions" value="1"/>
</dbReference>
<dbReference type="FunCoup" id="Q9LU39">
    <property type="interactions" value="1274"/>
</dbReference>
<dbReference type="IntAct" id="Q9LU39">
    <property type="interactions" value="1"/>
</dbReference>
<dbReference type="STRING" id="3702.Q9LU39"/>
<dbReference type="PaxDb" id="3702-AT3G21200.1"/>
<dbReference type="ProteomicsDB" id="247403"/>
<dbReference type="EnsemblPlants" id="AT3G21200.1">
    <property type="protein sequence ID" value="AT3G21200.1"/>
    <property type="gene ID" value="AT3G21200"/>
</dbReference>
<dbReference type="GeneID" id="821673"/>
<dbReference type="Gramene" id="AT3G21200.1">
    <property type="protein sequence ID" value="AT3G21200.1"/>
    <property type="gene ID" value="AT3G21200"/>
</dbReference>
<dbReference type="KEGG" id="ath:AT3G21200"/>
<dbReference type="Araport" id="AT3G21200"/>
<dbReference type="TAIR" id="AT3G21200">
    <property type="gene designation" value="PGR7"/>
</dbReference>
<dbReference type="eggNOG" id="ENOG502QT0S">
    <property type="taxonomic scope" value="Eukaryota"/>
</dbReference>
<dbReference type="HOGENOM" id="CLU_051089_0_0_1"/>
<dbReference type="InParanoid" id="Q9LU39"/>
<dbReference type="OMA" id="KSTFNCM"/>
<dbReference type="PhylomeDB" id="Q9LU39"/>
<dbReference type="EvolutionaryTrace" id="Q9LU39"/>
<dbReference type="PRO" id="PR:Q9LU39"/>
<dbReference type="Proteomes" id="UP000006548">
    <property type="component" value="Chromosome 3"/>
</dbReference>
<dbReference type="ExpressionAtlas" id="Q9LU39">
    <property type="expression patterns" value="baseline and differential"/>
</dbReference>
<dbReference type="GO" id="GO:0009507">
    <property type="term" value="C:chloroplast"/>
    <property type="evidence" value="ECO:0000314"/>
    <property type="project" value="TAIR"/>
</dbReference>
<dbReference type="GO" id="GO:0009570">
    <property type="term" value="C:chloroplast stroma"/>
    <property type="evidence" value="ECO:0000314"/>
    <property type="project" value="TAIR"/>
</dbReference>
<dbReference type="GO" id="GO:0009534">
    <property type="term" value="C:chloroplast thylakoid"/>
    <property type="evidence" value="ECO:0000314"/>
    <property type="project" value="TAIR"/>
</dbReference>
<dbReference type="GO" id="GO:0032991">
    <property type="term" value="C:protein-containing complex"/>
    <property type="evidence" value="ECO:0000353"/>
    <property type="project" value="TAIR"/>
</dbReference>
<dbReference type="GO" id="GO:0043495">
    <property type="term" value="F:protein-membrane adaptor activity"/>
    <property type="evidence" value="ECO:0000314"/>
    <property type="project" value="TAIR"/>
</dbReference>
<dbReference type="GO" id="GO:0015995">
    <property type="term" value="P:chlorophyll biosynthetic process"/>
    <property type="evidence" value="ECO:0007669"/>
    <property type="project" value="UniProtKB-KW"/>
</dbReference>
<dbReference type="GO" id="GO:0006783">
    <property type="term" value="P:heme biosynthetic process"/>
    <property type="evidence" value="ECO:0007669"/>
    <property type="project" value="UniProtKB-KW"/>
</dbReference>
<dbReference type="GO" id="GO:0009767">
    <property type="term" value="P:photosynthetic electron transport chain"/>
    <property type="evidence" value="ECO:0000315"/>
    <property type="project" value="TAIR"/>
</dbReference>
<dbReference type="GO" id="GO:0070455">
    <property type="term" value="P:positive regulation of heme biosynthetic process"/>
    <property type="evidence" value="ECO:0000315"/>
    <property type="project" value="TAIR"/>
</dbReference>
<dbReference type="GO" id="GO:0009791">
    <property type="term" value="P:post-embryonic development"/>
    <property type="evidence" value="ECO:0000315"/>
    <property type="project" value="TAIR"/>
</dbReference>
<dbReference type="GO" id="GO:0033014">
    <property type="term" value="P:tetrapyrrole biosynthetic process"/>
    <property type="evidence" value="ECO:0000315"/>
    <property type="project" value="TAIR"/>
</dbReference>
<dbReference type="FunFam" id="3.20.180.10:FF:000001">
    <property type="entry name" value="Glutamyl-tRNA reductase-binding protein chloroplastic"/>
    <property type="match status" value="1"/>
</dbReference>
<dbReference type="FunFam" id="2.30.110.10:FF:000015">
    <property type="entry name" value="Glutamyl-tRNA reductase-binding protein, chloroplastic"/>
    <property type="match status" value="1"/>
</dbReference>
<dbReference type="Gene3D" id="2.30.110.10">
    <property type="entry name" value="Electron Transport, Fmn-binding Protein, Chain A"/>
    <property type="match status" value="1"/>
</dbReference>
<dbReference type="Gene3D" id="3.20.180.10">
    <property type="entry name" value="PNP-oxidase-like"/>
    <property type="match status" value="1"/>
</dbReference>
<dbReference type="InterPro" id="IPR019595">
    <property type="entry name" value="DUF2470"/>
</dbReference>
<dbReference type="InterPro" id="IPR037119">
    <property type="entry name" value="Haem_oxidase_HugZ-like_sf"/>
</dbReference>
<dbReference type="InterPro" id="IPR012349">
    <property type="entry name" value="Split_barrel_FMN-bd"/>
</dbReference>
<dbReference type="PANTHER" id="PTHR13343">
    <property type="entry name" value="CREG1 PROTEIN"/>
    <property type="match status" value="1"/>
</dbReference>
<dbReference type="PANTHER" id="PTHR13343:SF22">
    <property type="entry name" value="GLUTAMYL-TRNA REDUCTASE-BINDING PROTEIN, CHLOROPLASTIC"/>
    <property type="match status" value="1"/>
</dbReference>
<dbReference type="Pfam" id="PF10615">
    <property type="entry name" value="DUF2470"/>
    <property type="match status" value="1"/>
</dbReference>
<dbReference type="SUPFAM" id="SSF50475">
    <property type="entry name" value="FMN-binding split barrel"/>
    <property type="match status" value="1"/>
</dbReference>
<keyword id="KW-0002">3D-structure</keyword>
<keyword id="KW-0149">Chlorophyll biosynthesis</keyword>
<keyword id="KW-0150">Chloroplast</keyword>
<keyword id="KW-0350">Heme biosynthesis</keyword>
<keyword id="KW-0934">Plastid</keyword>
<keyword id="KW-1185">Reference proteome</keyword>
<keyword id="KW-0809">Transit peptide</keyword>
<name>GLUBP_ARATH</name>
<accession>Q9LU39</accession>
<accession>Q8LAE4</accession>
<evidence type="ECO:0000255" key="1"/>
<evidence type="ECO:0000269" key="2">
    <source>
    </source>
</evidence>
<evidence type="ECO:0000269" key="3">
    <source>
    </source>
</evidence>
<evidence type="ECO:0000269" key="4">
    <source>
    </source>
</evidence>
<evidence type="ECO:0000303" key="5">
    <source>
    </source>
</evidence>
<evidence type="ECO:0000303" key="6">
    <source>
    </source>
</evidence>
<evidence type="ECO:0000305" key="7"/>
<evidence type="ECO:0000312" key="8">
    <source>
        <dbReference type="Araport" id="AT3G21200"/>
    </source>
</evidence>
<evidence type="ECO:0000312" key="9">
    <source>
        <dbReference type="EMBL" id="AAL32732.1"/>
    </source>
</evidence>
<evidence type="ECO:0007829" key="10">
    <source>
        <dbReference type="PDB" id="4N7R"/>
    </source>
</evidence>
<evidence type="ECO:0007829" key="11">
    <source>
        <dbReference type="PDB" id="5YJL"/>
    </source>
</evidence>